<reference key="1">
    <citation type="submission" date="2007-11" db="EMBL/GenBank/DDBJ databases">
        <title>Genome sequencing of phylogenetically and phenotypically diverse Coxiella burnetii isolates.</title>
        <authorList>
            <person name="Seshadri R."/>
            <person name="Samuel J.E."/>
        </authorList>
    </citation>
    <scope>NUCLEOTIDE SEQUENCE [LARGE SCALE GENOMIC DNA]</scope>
    <source>
        <strain>RSA 331 / Henzerling II</strain>
    </source>
</reference>
<proteinExistence type="inferred from homology"/>
<evidence type="ECO:0000255" key="1">
    <source>
        <dbReference type="HAMAP-Rule" id="MF_01690"/>
    </source>
</evidence>
<gene>
    <name evidence="1" type="primary">dapE</name>
    <name type="ordered locus">COXBURSA331_A0781</name>
</gene>
<accession>A9NCE9</accession>
<feature type="chain" id="PRO_0000375538" description="Succinyl-diaminopimelate desuccinylase">
    <location>
        <begin position="1"/>
        <end position="374"/>
    </location>
</feature>
<feature type="active site" evidence="1">
    <location>
        <position position="68"/>
    </location>
</feature>
<feature type="active site" description="Proton acceptor" evidence="1">
    <location>
        <position position="133"/>
    </location>
</feature>
<feature type="binding site" evidence="1">
    <location>
        <position position="66"/>
    </location>
    <ligand>
        <name>Zn(2+)</name>
        <dbReference type="ChEBI" id="CHEBI:29105"/>
        <label>1</label>
    </ligand>
</feature>
<feature type="binding site" evidence="1">
    <location>
        <position position="99"/>
    </location>
    <ligand>
        <name>Zn(2+)</name>
        <dbReference type="ChEBI" id="CHEBI:29105"/>
        <label>1</label>
    </ligand>
</feature>
<feature type="binding site" evidence="1">
    <location>
        <position position="99"/>
    </location>
    <ligand>
        <name>Zn(2+)</name>
        <dbReference type="ChEBI" id="CHEBI:29105"/>
        <label>2</label>
    </ligand>
</feature>
<feature type="binding site" evidence="1">
    <location>
        <position position="134"/>
    </location>
    <ligand>
        <name>Zn(2+)</name>
        <dbReference type="ChEBI" id="CHEBI:29105"/>
        <label>2</label>
    </ligand>
</feature>
<feature type="binding site" evidence="1">
    <location>
        <position position="162"/>
    </location>
    <ligand>
        <name>Zn(2+)</name>
        <dbReference type="ChEBI" id="CHEBI:29105"/>
        <label>1</label>
    </ligand>
</feature>
<feature type="binding site" evidence="1">
    <location>
        <position position="348"/>
    </location>
    <ligand>
        <name>Zn(2+)</name>
        <dbReference type="ChEBI" id="CHEBI:29105"/>
        <label>2</label>
    </ligand>
</feature>
<organism>
    <name type="scientific">Coxiella burnetii (strain RSA 331 / Henzerling II)</name>
    <dbReference type="NCBI Taxonomy" id="360115"/>
    <lineage>
        <taxon>Bacteria</taxon>
        <taxon>Pseudomonadati</taxon>
        <taxon>Pseudomonadota</taxon>
        <taxon>Gammaproteobacteria</taxon>
        <taxon>Legionellales</taxon>
        <taxon>Coxiellaceae</taxon>
        <taxon>Coxiella</taxon>
    </lineage>
</organism>
<sequence>MSETLNLLKQLIERPSITPNDAGCQTILIDRLKSVGFQCEHLPFGEVHNFWAWHGHQSPFIIFAGHTDVVPPGDETQWHSPPFTPTEKNGYIYGRGAADMKSGLAAMVVAAENFVKQNPDHNGTIGFIVTSDEEGPAENGTQKVVDYLQQKNIKLDYCIVGEASSNEKLGDAIKIGRRGSMHGELTIIGKQGHIAYPHLADNPIHRSFQAFEALAKTKWDEGNEHFTPTSFQFYNVEAGAGAANVIPATLKAKFNFRFAPIHTTQQLQQKVERILNYYQLNYDIQWNVSSQPFFSGNGRLATFVRQAIQEICHLNTEPNTYGGTSDGRFIATTGCEVIELGPVNKTAHHVNENICIADLEKLTDIYFRTLQLLI</sequence>
<dbReference type="EC" id="3.5.1.18" evidence="1"/>
<dbReference type="EMBL" id="CP000890">
    <property type="protein sequence ID" value="ABX77698.1"/>
    <property type="molecule type" value="Genomic_DNA"/>
</dbReference>
<dbReference type="RefSeq" id="WP_012220310.1">
    <property type="nucleotide sequence ID" value="NC_010117.1"/>
</dbReference>
<dbReference type="SMR" id="A9NCE9"/>
<dbReference type="KEGG" id="cbs:COXBURSA331_A0781"/>
<dbReference type="HOGENOM" id="CLU_021802_4_0_6"/>
<dbReference type="UniPathway" id="UPA00034">
    <property type="reaction ID" value="UER00021"/>
</dbReference>
<dbReference type="GO" id="GO:0008777">
    <property type="term" value="F:acetylornithine deacetylase activity"/>
    <property type="evidence" value="ECO:0007669"/>
    <property type="project" value="TreeGrafter"/>
</dbReference>
<dbReference type="GO" id="GO:0050897">
    <property type="term" value="F:cobalt ion binding"/>
    <property type="evidence" value="ECO:0007669"/>
    <property type="project" value="UniProtKB-UniRule"/>
</dbReference>
<dbReference type="GO" id="GO:0009014">
    <property type="term" value="F:succinyl-diaminopimelate desuccinylase activity"/>
    <property type="evidence" value="ECO:0007669"/>
    <property type="project" value="UniProtKB-UniRule"/>
</dbReference>
<dbReference type="GO" id="GO:0008270">
    <property type="term" value="F:zinc ion binding"/>
    <property type="evidence" value="ECO:0007669"/>
    <property type="project" value="UniProtKB-UniRule"/>
</dbReference>
<dbReference type="GO" id="GO:0019877">
    <property type="term" value="P:diaminopimelate biosynthetic process"/>
    <property type="evidence" value="ECO:0007669"/>
    <property type="project" value="UniProtKB-UniRule"/>
</dbReference>
<dbReference type="GO" id="GO:0006526">
    <property type="term" value="P:L-arginine biosynthetic process"/>
    <property type="evidence" value="ECO:0007669"/>
    <property type="project" value="TreeGrafter"/>
</dbReference>
<dbReference type="GO" id="GO:0009089">
    <property type="term" value="P:lysine biosynthetic process via diaminopimelate"/>
    <property type="evidence" value="ECO:0007669"/>
    <property type="project" value="UniProtKB-UniRule"/>
</dbReference>
<dbReference type="CDD" id="cd03891">
    <property type="entry name" value="M20_DapE_proteobac"/>
    <property type="match status" value="1"/>
</dbReference>
<dbReference type="FunFam" id="3.30.70.360:FF:000011">
    <property type="entry name" value="Succinyl-diaminopimelate desuccinylase"/>
    <property type="match status" value="1"/>
</dbReference>
<dbReference type="FunFam" id="3.40.630.10:FF:000005">
    <property type="entry name" value="Succinyl-diaminopimelate desuccinylase"/>
    <property type="match status" value="1"/>
</dbReference>
<dbReference type="Gene3D" id="3.30.70.360">
    <property type="match status" value="1"/>
</dbReference>
<dbReference type="Gene3D" id="3.40.630.10">
    <property type="entry name" value="Zn peptidases"/>
    <property type="match status" value="2"/>
</dbReference>
<dbReference type="HAMAP" id="MF_01690">
    <property type="entry name" value="DapE"/>
    <property type="match status" value="1"/>
</dbReference>
<dbReference type="InterPro" id="IPR001261">
    <property type="entry name" value="ArgE/DapE_CS"/>
</dbReference>
<dbReference type="InterPro" id="IPR036264">
    <property type="entry name" value="Bact_exopeptidase_dim_dom"/>
</dbReference>
<dbReference type="InterPro" id="IPR005941">
    <property type="entry name" value="DapE_proteobac"/>
</dbReference>
<dbReference type="InterPro" id="IPR002933">
    <property type="entry name" value="Peptidase_M20"/>
</dbReference>
<dbReference type="InterPro" id="IPR011650">
    <property type="entry name" value="Peptidase_M20_dimer"/>
</dbReference>
<dbReference type="InterPro" id="IPR050072">
    <property type="entry name" value="Peptidase_M20A"/>
</dbReference>
<dbReference type="NCBIfam" id="TIGR01246">
    <property type="entry name" value="dapE_proteo"/>
    <property type="match status" value="1"/>
</dbReference>
<dbReference type="NCBIfam" id="NF009557">
    <property type="entry name" value="PRK13009.1"/>
    <property type="match status" value="1"/>
</dbReference>
<dbReference type="PANTHER" id="PTHR43808">
    <property type="entry name" value="ACETYLORNITHINE DEACETYLASE"/>
    <property type="match status" value="1"/>
</dbReference>
<dbReference type="PANTHER" id="PTHR43808:SF31">
    <property type="entry name" value="N-ACETYL-L-CITRULLINE DEACETYLASE"/>
    <property type="match status" value="1"/>
</dbReference>
<dbReference type="Pfam" id="PF07687">
    <property type="entry name" value="M20_dimer"/>
    <property type="match status" value="1"/>
</dbReference>
<dbReference type="Pfam" id="PF01546">
    <property type="entry name" value="Peptidase_M20"/>
    <property type="match status" value="1"/>
</dbReference>
<dbReference type="SUPFAM" id="SSF55031">
    <property type="entry name" value="Bacterial exopeptidase dimerisation domain"/>
    <property type="match status" value="1"/>
</dbReference>
<dbReference type="SUPFAM" id="SSF53187">
    <property type="entry name" value="Zn-dependent exopeptidases"/>
    <property type="match status" value="1"/>
</dbReference>
<dbReference type="PROSITE" id="PS00759">
    <property type="entry name" value="ARGE_DAPE_CPG2_2"/>
    <property type="match status" value="1"/>
</dbReference>
<keyword id="KW-0028">Amino-acid biosynthesis</keyword>
<keyword id="KW-0170">Cobalt</keyword>
<keyword id="KW-0220">Diaminopimelate biosynthesis</keyword>
<keyword id="KW-0378">Hydrolase</keyword>
<keyword id="KW-0457">Lysine biosynthesis</keyword>
<keyword id="KW-0479">Metal-binding</keyword>
<keyword id="KW-0862">Zinc</keyword>
<comment type="function">
    <text evidence="1">Catalyzes the hydrolysis of N-succinyl-L,L-diaminopimelic acid (SDAP), forming succinate and LL-2,6-diaminopimelate (DAP), an intermediate involved in the bacterial biosynthesis of lysine and meso-diaminopimelic acid, an essential component of bacterial cell walls.</text>
</comment>
<comment type="catalytic activity">
    <reaction evidence="1">
        <text>N-succinyl-(2S,6S)-2,6-diaminopimelate + H2O = (2S,6S)-2,6-diaminopimelate + succinate</text>
        <dbReference type="Rhea" id="RHEA:22608"/>
        <dbReference type="ChEBI" id="CHEBI:15377"/>
        <dbReference type="ChEBI" id="CHEBI:30031"/>
        <dbReference type="ChEBI" id="CHEBI:57609"/>
        <dbReference type="ChEBI" id="CHEBI:58087"/>
        <dbReference type="EC" id="3.5.1.18"/>
    </reaction>
</comment>
<comment type="cofactor">
    <cofactor evidence="1">
        <name>Zn(2+)</name>
        <dbReference type="ChEBI" id="CHEBI:29105"/>
    </cofactor>
    <cofactor evidence="1">
        <name>Co(2+)</name>
        <dbReference type="ChEBI" id="CHEBI:48828"/>
    </cofactor>
    <text evidence="1">Binds 2 Zn(2+) or Co(2+) ions per subunit.</text>
</comment>
<comment type="pathway">
    <text evidence="1">Amino-acid biosynthesis; L-lysine biosynthesis via DAP pathway; LL-2,6-diaminopimelate from (S)-tetrahydrodipicolinate (succinylase route): step 3/3.</text>
</comment>
<comment type="subunit">
    <text evidence="1">Homodimer.</text>
</comment>
<comment type="similarity">
    <text evidence="1">Belongs to the peptidase M20A family. DapE subfamily.</text>
</comment>
<protein>
    <recommendedName>
        <fullName evidence="1">Succinyl-diaminopimelate desuccinylase</fullName>
        <shortName evidence="1">SDAP desuccinylase</shortName>
        <ecNumber evidence="1">3.5.1.18</ecNumber>
    </recommendedName>
    <alternativeName>
        <fullName evidence="1">N-succinyl-LL-2,6-diaminoheptanedioate amidohydrolase</fullName>
    </alternativeName>
</protein>
<name>DAPE_COXBR</name>